<gene>
    <name type="primary">HOX4</name>
    <name type="ordered locus">Os09g0470500</name>
    <name type="ordered locus">LOC_Os09g29460</name>
    <name type="ORF">OJ1595_D08.21</name>
</gene>
<evidence type="ECO:0000255" key="1">
    <source>
        <dbReference type="PROSITE-ProRule" id="PRU00108"/>
    </source>
</evidence>
<evidence type="ECO:0000256" key="2">
    <source>
        <dbReference type="SAM" id="MobiDB-lite"/>
    </source>
</evidence>
<evidence type="ECO:0000269" key="3">
    <source>
    </source>
</evidence>
<evidence type="ECO:0000269" key="4">
    <source>
    </source>
</evidence>
<evidence type="ECO:0000269" key="5">
    <source>
    </source>
</evidence>
<evidence type="ECO:0000305" key="6"/>
<feature type="chain" id="PRO_0000331681" description="Homeobox-leucine zipper protein HOX4">
    <location>
        <begin position="1"/>
        <end position="277"/>
    </location>
</feature>
<feature type="DNA-binding region" description="Homeobox" evidence="1">
    <location>
        <begin position="48"/>
        <end position="107"/>
    </location>
</feature>
<feature type="region of interest" description="Disordered" evidence="2">
    <location>
        <begin position="1"/>
        <end position="35"/>
    </location>
</feature>
<feature type="region of interest" description="Leucine-zipper">
    <location>
        <begin position="106"/>
        <end position="150"/>
    </location>
</feature>
<feature type="region of interest" description="Disordered" evidence="2">
    <location>
        <begin position="154"/>
        <end position="180"/>
    </location>
</feature>
<feature type="region of interest" description="Disordered" evidence="2">
    <location>
        <begin position="250"/>
        <end position="277"/>
    </location>
</feature>
<feature type="compositionally biased region" description="Gly residues" evidence="2">
    <location>
        <begin position="1"/>
        <end position="13"/>
    </location>
</feature>
<feature type="compositionally biased region" description="Polar residues" evidence="2">
    <location>
        <begin position="15"/>
        <end position="24"/>
    </location>
</feature>
<feature type="compositionally biased region" description="Low complexity" evidence="2">
    <location>
        <begin position="171"/>
        <end position="180"/>
    </location>
</feature>
<feature type="sequence conflict" description="In Ref. 4; AK099710." evidence="6" ref="4">
    <original>A</original>
    <variation>D</variation>
    <location>
        <position position="165"/>
    </location>
</feature>
<proteinExistence type="evidence at protein level"/>
<reference key="1">
    <citation type="journal article" date="2005" name="Nature">
        <title>The map-based sequence of the rice genome.</title>
        <authorList>
            <consortium name="International rice genome sequencing project (IRGSP)"/>
        </authorList>
    </citation>
    <scope>NUCLEOTIDE SEQUENCE [LARGE SCALE GENOMIC DNA]</scope>
    <source>
        <strain>cv. Nipponbare</strain>
    </source>
</reference>
<reference key="2">
    <citation type="journal article" date="2008" name="Nucleic Acids Res.">
        <title>The rice annotation project database (RAP-DB): 2008 update.</title>
        <authorList>
            <consortium name="The rice annotation project (RAP)"/>
        </authorList>
    </citation>
    <scope>GENOME REANNOTATION</scope>
    <source>
        <strain>cv. Nipponbare</strain>
    </source>
</reference>
<reference key="3">
    <citation type="journal article" date="2013" name="Rice">
        <title>Improvement of the Oryza sativa Nipponbare reference genome using next generation sequence and optical map data.</title>
        <authorList>
            <person name="Kawahara Y."/>
            <person name="de la Bastide M."/>
            <person name="Hamilton J.P."/>
            <person name="Kanamori H."/>
            <person name="McCombie W.R."/>
            <person name="Ouyang S."/>
            <person name="Schwartz D.C."/>
            <person name="Tanaka T."/>
            <person name="Wu J."/>
            <person name="Zhou S."/>
            <person name="Childs K.L."/>
            <person name="Davidson R.M."/>
            <person name="Lin H."/>
            <person name="Quesada-Ocampo L."/>
            <person name="Vaillancourt B."/>
            <person name="Sakai H."/>
            <person name="Lee S.S."/>
            <person name="Kim J."/>
            <person name="Numa H."/>
            <person name="Itoh T."/>
            <person name="Buell C.R."/>
            <person name="Matsumoto T."/>
        </authorList>
    </citation>
    <scope>GENOME REANNOTATION</scope>
    <source>
        <strain>cv. Nipponbare</strain>
    </source>
</reference>
<reference key="4">
    <citation type="journal article" date="2003" name="Science">
        <title>Collection, mapping, and annotation of over 28,000 cDNA clones from japonica rice.</title>
        <authorList>
            <consortium name="The rice full-length cDNA consortium"/>
        </authorList>
    </citation>
    <scope>NUCLEOTIDE SEQUENCE [LARGE SCALE MRNA]</scope>
    <source>
        <strain>cv. Nipponbare</strain>
    </source>
</reference>
<reference key="5">
    <citation type="journal article" date="2000" name="Mol. Gen. Genet.">
        <title>HD-Zip proteins of families I and II from rice: interactions and functional properties.</title>
        <authorList>
            <person name="Meijer A.H."/>
            <person name="de Kam R.J."/>
            <person name="d'Erfurth I."/>
            <person name="Shen W.-B."/>
            <person name="Hoge J.H.C."/>
        </authorList>
    </citation>
    <scope>FUNCTION</scope>
    <scope>SUBUNIT</scope>
    <scope>TISSUE SPECIFICITY</scope>
</reference>
<reference key="6">
    <citation type="journal article" date="2008" name="Plant Mol. Biol.">
        <title>A genome-wide survey of HD-Zip genes in rice and analysis of drought-responsive family members.</title>
        <authorList>
            <person name="Agalou A."/>
            <person name="Purwantomo S."/>
            <person name="Oevernaes E."/>
            <person name="Johannesson H."/>
            <person name="Zhu X."/>
            <person name="Estiati A."/>
            <person name="de Kam R.J."/>
            <person name="Engstroem P."/>
            <person name="Slamet-Loedin I.H."/>
            <person name="Zhu Z."/>
            <person name="Wang M."/>
            <person name="Xiong L."/>
            <person name="Meijer A.H."/>
            <person name="Ouwerkerk P.B.F."/>
        </authorList>
    </citation>
    <scope>TISSUE SPECIFICITY</scope>
    <scope>INDUCTION</scope>
    <scope>GENE FAMILY</scope>
    <scope>NOMENCLATURE</scope>
</reference>
<reference key="7">
    <citation type="journal article" date="2008" name="Plant Mol. Biol.">
        <title>Functional analysis of rice HOMEOBOX4 (Oshox4) gene reveals a negative function in gibberellin responses.</title>
        <authorList>
            <person name="Dai M."/>
            <person name="Hu Y."/>
            <person name="Ma Q."/>
            <person name="Zhao Y."/>
            <person name="Zhou D.-X."/>
        </authorList>
    </citation>
    <scope>FUNCTION</scope>
    <scope>SUBCELLULAR LOCATION</scope>
    <scope>TISSUE SPECIFICITY</scope>
    <scope>INDUCTION</scope>
</reference>
<name>HOX4_ORYSJ</name>
<sequence length="277" mass="29392">MKRPGGAGGGGGSPSLVTMANSSDDGYGGVGMEAEGDVEEEMMACGGGGEKKRRLSVEQVRALERSFEVENKLEPERKARLARDLGLQPRQVAVWFQNRRARWKTKQLERDYAALRHSYDSLRLDHDALRRDKDALLAEIKELKAKLGDEEAAASFTSVKEEPAASDGPPAAGFGSSDSDSSAVLNDVDAAGAAPAATDALAPEACTFLGAPPAAGAGAGAAAAASHEEVFFHGNFLKVEEDETGFLDDDEPCGGFFADDQPPPLSSWWAEPTEHWN</sequence>
<comment type="function">
    <text evidence="3 5">Probable transcription activator that binds to the DNA sequence 5'-CAAT[AT]ATTG-3'. May be involved in the regulation of gibberellin signaling.</text>
</comment>
<comment type="subunit">
    <text evidence="3 6">Homodimer (Probable). May form a heterodimer with HOX5.</text>
</comment>
<comment type="subcellular location">
    <subcellularLocation>
        <location evidence="1 5">Nucleus</location>
    </subcellularLocation>
</comment>
<comment type="tissue specificity">
    <text evidence="3 4 5">Expressed in leaf and floral organ primordia, floral meristems, embryonic axis and cells surrounding the vascular bundles. Expressed in the vasculature of roots, stem, leaves and spikelets, and in the vascular bundle of the scutellum in embryos.</text>
</comment>
<comment type="induction">
    <text evidence="4 5">By gibberellin. Down-regulated in leaves by drought stress.</text>
</comment>
<comment type="similarity">
    <text evidence="6">Belongs to the HD-ZIP homeobox family. Class I subfamily.</text>
</comment>
<protein>
    <recommendedName>
        <fullName>Homeobox-leucine zipper protein HOX4</fullName>
    </recommendedName>
    <alternativeName>
        <fullName>HD-ZIP protein HOX4</fullName>
    </alternativeName>
    <alternativeName>
        <fullName>Homeodomain transcription factor HOX4</fullName>
    </alternativeName>
    <alternativeName>
        <fullName>OsHox4</fullName>
    </alternativeName>
</protein>
<organism>
    <name type="scientific">Oryza sativa subsp. japonica</name>
    <name type="common">Rice</name>
    <dbReference type="NCBI Taxonomy" id="39947"/>
    <lineage>
        <taxon>Eukaryota</taxon>
        <taxon>Viridiplantae</taxon>
        <taxon>Streptophyta</taxon>
        <taxon>Embryophyta</taxon>
        <taxon>Tracheophyta</taxon>
        <taxon>Spermatophyta</taxon>
        <taxon>Magnoliopsida</taxon>
        <taxon>Liliopsida</taxon>
        <taxon>Poales</taxon>
        <taxon>Poaceae</taxon>
        <taxon>BOP clade</taxon>
        <taxon>Oryzoideae</taxon>
        <taxon>Oryzeae</taxon>
        <taxon>Oryzinae</taxon>
        <taxon>Oryza</taxon>
        <taxon>Oryza sativa</taxon>
    </lineage>
</organism>
<keyword id="KW-0010">Activator</keyword>
<keyword id="KW-0238">DNA-binding</keyword>
<keyword id="KW-0371">Homeobox</keyword>
<keyword id="KW-0539">Nucleus</keyword>
<keyword id="KW-1185">Reference proteome</keyword>
<keyword id="KW-0804">Transcription</keyword>
<keyword id="KW-0805">Transcription regulation</keyword>
<accession>Q6K498</accession>
<accession>A0A0P0XNP7</accession>
<dbReference type="EMBL" id="AP005574">
    <property type="protein sequence ID" value="BAD22271.1"/>
    <property type="molecule type" value="Genomic_DNA"/>
</dbReference>
<dbReference type="EMBL" id="AP008215">
    <property type="protein sequence ID" value="BAF25350.1"/>
    <property type="molecule type" value="Genomic_DNA"/>
</dbReference>
<dbReference type="EMBL" id="AP014965">
    <property type="protein sequence ID" value="BAT08549.1"/>
    <property type="molecule type" value="Genomic_DNA"/>
</dbReference>
<dbReference type="EMBL" id="AK099710">
    <property type="status" value="NOT_ANNOTATED_CDS"/>
    <property type="molecule type" value="mRNA"/>
</dbReference>
<dbReference type="RefSeq" id="XP_015612509.1">
    <property type="nucleotide sequence ID" value="XM_015757023.1"/>
</dbReference>
<dbReference type="SMR" id="Q6K498"/>
<dbReference type="FunCoup" id="Q6K498">
    <property type="interactions" value="222"/>
</dbReference>
<dbReference type="STRING" id="39947.Q6K498"/>
<dbReference type="PaxDb" id="39947-Q6K498"/>
<dbReference type="EnsemblPlants" id="Os09t0470500-01">
    <property type="protein sequence ID" value="Os09t0470500-01"/>
    <property type="gene ID" value="Os09g0470500"/>
</dbReference>
<dbReference type="Gramene" id="Os09t0470500-01">
    <property type="protein sequence ID" value="Os09t0470500-01"/>
    <property type="gene ID" value="Os09g0470500"/>
</dbReference>
<dbReference type="KEGG" id="dosa:Os09g0470500"/>
<dbReference type="eggNOG" id="KOG0483">
    <property type="taxonomic scope" value="Eukaryota"/>
</dbReference>
<dbReference type="HOGENOM" id="CLU_060842_1_0_1"/>
<dbReference type="InParanoid" id="Q6K498"/>
<dbReference type="OMA" id="SWWTEPT"/>
<dbReference type="OrthoDB" id="6159439at2759"/>
<dbReference type="Proteomes" id="UP000000763">
    <property type="component" value="Chromosome 9"/>
</dbReference>
<dbReference type="Proteomes" id="UP000059680">
    <property type="component" value="Chromosome 9"/>
</dbReference>
<dbReference type="GO" id="GO:0005634">
    <property type="term" value="C:nucleus"/>
    <property type="evidence" value="ECO:0000318"/>
    <property type="project" value="GO_Central"/>
</dbReference>
<dbReference type="GO" id="GO:0000981">
    <property type="term" value="F:DNA-binding transcription factor activity, RNA polymerase II-specific"/>
    <property type="evidence" value="ECO:0007669"/>
    <property type="project" value="InterPro"/>
</dbReference>
<dbReference type="GO" id="GO:0043565">
    <property type="term" value="F:sequence-specific DNA binding"/>
    <property type="evidence" value="ECO:0000318"/>
    <property type="project" value="GO_Central"/>
</dbReference>
<dbReference type="GO" id="GO:0045893">
    <property type="term" value="P:positive regulation of DNA-templated transcription"/>
    <property type="evidence" value="ECO:0000318"/>
    <property type="project" value="GO_Central"/>
</dbReference>
<dbReference type="CDD" id="cd00086">
    <property type="entry name" value="homeodomain"/>
    <property type="match status" value="1"/>
</dbReference>
<dbReference type="FunFam" id="1.10.10.60:FF:000159">
    <property type="entry name" value="Homeobox-leucine zipper protein HAT5"/>
    <property type="match status" value="1"/>
</dbReference>
<dbReference type="Gene3D" id="1.10.10.60">
    <property type="entry name" value="Homeodomain-like"/>
    <property type="match status" value="1"/>
</dbReference>
<dbReference type="InterPro" id="IPR001356">
    <property type="entry name" value="HD"/>
</dbReference>
<dbReference type="InterPro" id="IPR045224">
    <property type="entry name" value="HDZip_class_I_plant"/>
</dbReference>
<dbReference type="InterPro" id="IPR017970">
    <property type="entry name" value="Homeobox_CS"/>
</dbReference>
<dbReference type="InterPro" id="IPR009057">
    <property type="entry name" value="Homeodomain-like_sf"/>
</dbReference>
<dbReference type="InterPro" id="IPR000047">
    <property type="entry name" value="HTH_motif"/>
</dbReference>
<dbReference type="InterPro" id="IPR003106">
    <property type="entry name" value="Leu_zip_homeo"/>
</dbReference>
<dbReference type="PANTHER" id="PTHR24326">
    <property type="entry name" value="HOMEOBOX-LEUCINE ZIPPER PROTEIN"/>
    <property type="match status" value="1"/>
</dbReference>
<dbReference type="PANTHER" id="PTHR24326:SF547">
    <property type="entry name" value="HOMEOBOX-LEUCINE ZIPPER PROTEIN ATHB-6"/>
    <property type="match status" value="1"/>
</dbReference>
<dbReference type="Pfam" id="PF02183">
    <property type="entry name" value="HALZ"/>
    <property type="match status" value="1"/>
</dbReference>
<dbReference type="Pfam" id="PF00046">
    <property type="entry name" value="Homeodomain"/>
    <property type="match status" value="1"/>
</dbReference>
<dbReference type="PRINTS" id="PR00031">
    <property type="entry name" value="HTHREPRESSR"/>
</dbReference>
<dbReference type="SMART" id="SM00389">
    <property type="entry name" value="HOX"/>
    <property type="match status" value="1"/>
</dbReference>
<dbReference type="SUPFAM" id="SSF46689">
    <property type="entry name" value="Homeodomain-like"/>
    <property type="match status" value="1"/>
</dbReference>
<dbReference type="PROSITE" id="PS00027">
    <property type="entry name" value="HOMEOBOX_1"/>
    <property type="match status" value="1"/>
</dbReference>
<dbReference type="PROSITE" id="PS50071">
    <property type="entry name" value="HOMEOBOX_2"/>
    <property type="match status" value="1"/>
</dbReference>